<evidence type="ECO:0000250" key="1">
    <source>
        <dbReference type="UniProtKB" id="P02088"/>
    </source>
</evidence>
<evidence type="ECO:0000250" key="2">
    <source>
        <dbReference type="UniProtKB" id="P02089"/>
    </source>
</evidence>
<evidence type="ECO:0000250" key="3">
    <source>
        <dbReference type="UniProtKB" id="P02091"/>
    </source>
</evidence>
<evidence type="ECO:0000255" key="4">
    <source>
        <dbReference type="PROSITE-ProRule" id="PRU00238"/>
    </source>
</evidence>
<evidence type="ECO:0000269" key="5">
    <source ref="1"/>
</evidence>
<gene>
    <name type="primary">HBB1</name>
</gene>
<proteinExistence type="evidence at protein level"/>
<sequence>MSFLSAEEKGLVNGLWSKVNVDEVGGEALGRLLVVYPWTQRFFQSFGDLSSADAIMSNAKVKAHGKKVLNSFSDGLKNIDDLKGAFAKLSELHCDKLHVDPENFRLLGNVLVCVLAHHFGHEFNPQVQAAFQKVVAGVASALAHRYH</sequence>
<reference key="1">
    <citation type="journal article" date="1988" name="Z. Naturforsch. C">
        <title>Carnivora: the primary structure of the major and minor hemoglobin components of adult north Persian leopard (Panthera pardus sexicolor).</title>
        <authorList>
            <person name="Ahmed A."/>
            <person name="Jahan M."/>
            <person name="Braunitzer G."/>
            <person name="Goeltenboth R."/>
        </authorList>
    </citation>
    <scope>PROTEIN SEQUENCE OF 2-147</scope>
    <scope>ACETYLATION AT SER-2</scope>
</reference>
<comment type="function">
    <text>Involved in oxygen transport from the lung to the various peripheral tissues.</text>
</comment>
<comment type="subunit">
    <text>Heterotetramer of two alpha chains and two beta chains.</text>
</comment>
<comment type="tissue specificity">
    <text>Red blood cells.</text>
</comment>
<comment type="miscellaneous">
    <text>In the cat family (felidae), the oxygen affinity of hemoglobin depends little or not at all on the association with diphosphoglycerate (DPG).</text>
</comment>
<comment type="similarity">
    <text evidence="4">Belongs to the globin family.</text>
</comment>
<feature type="initiator methionine" description="Removed" evidence="5">
    <location>
        <position position="1"/>
    </location>
</feature>
<feature type="chain" id="PRO_0000053058" description="Hemoglobin subunit beta-1">
    <location>
        <begin position="2"/>
        <end position="147"/>
    </location>
</feature>
<feature type="domain" description="Globin" evidence="4">
    <location>
        <begin position="3"/>
        <end position="147"/>
    </location>
</feature>
<feature type="binding site" description="distal binding residue">
    <location>
        <position position="64"/>
    </location>
    <ligand>
        <name>heme b</name>
        <dbReference type="ChEBI" id="CHEBI:60344"/>
    </ligand>
    <ligandPart>
        <name>Fe</name>
        <dbReference type="ChEBI" id="CHEBI:18248"/>
    </ligandPart>
</feature>
<feature type="binding site" description="proximal binding residue">
    <location>
        <position position="93"/>
    </location>
    <ligand>
        <name>heme b</name>
        <dbReference type="ChEBI" id="CHEBI:60344"/>
    </ligand>
    <ligandPart>
        <name>Fe</name>
        <dbReference type="ChEBI" id="CHEBI:18248"/>
    </ligandPart>
</feature>
<feature type="modified residue" description="N-acetylserine" evidence="5">
    <location>
        <position position="2"/>
    </location>
</feature>
<feature type="modified residue" description="N6-succinyllysine" evidence="1">
    <location>
        <position position="18"/>
    </location>
</feature>
<feature type="modified residue" description="Phosphoserine" evidence="3">
    <location>
        <position position="45"/>
    </location>
</feature>
<feature type="modified residue" description="Phosphoserine" evidence="3">
    <location>
        <position position="51"/>
    </location>
</feature>
<feature type="modified residue" description="N6-succinyllysine" evidence="2">
    <location>
        <position position="60"/>
    </location>
</feature>
<feature type="modified residue" description="Asymmetric dimethylarginine" evidence="2">
    <location>
        <position position="105"/>
    </location>
</feature>
<organism>
    <name type="scientific">Panthera pardus saxicolor</name>
    <name type="common">Northern Persian leopard</name>
    <dbReference type="NCBI Taxonomy" id="9693"/>
    <lineage>
        <taxon>Eukaryota</taxon>
        <taxon>Metazoa</taxon>
        <taxon>Chordata</taxon>
        <taxon>Craniata</taxon>
        <taxon>Vertebrata</taxon>
        <taxon>Euteleostomi</taxon>
        <taxon>Mammalia</taxon>
        <taxon>Eutheria</taxon>
        <taxon>Laurasiatheria</taxon>
        <taxon>Carnivora</taxon>
        <taxon>Feliformia</taxon>
        <taxon>Felidae</taxon>
        <taxon>Pantherinae</taxon>
        <taxon>Panthera</taxon>
    </lineage>
</organism>
<accession>P68051</accession>
<accession>P10884</accession>
<dbReference type="PIR" id="S03928">
    <property type="entry name" value="HBPD1P"/>
</dbReference>
<dbReference type="SMR" id="P68051"/>
<dbReference type="GO" id="GO:0072562">
    <property type="term" value="C:blood microparticle"/>
    <property type="evidence" value="ECO:0007669"/>
    <property type="project" value="TreeGrafter"/>
</dbReference>
<dbReference type="GO" id="GO:0031838">
    <property type="term" value="C:haptoglobin-hemoglobin complex"/>
    <property type="evidence" value="ECO:0007669"/>
    <property type="project" value="TreeGrafter"/>
</dbReference>
<dbReference type="GO" id="GO:0005833">
    <property type="term" value="C:hemoglobin complex"/>
    <property type="evidence" value="ECO:0007669"/>
    <property type="project" value="InterPro"/>
</dbReference>
<dbReference type="GO" id="GO:0031720">
    <property type="term" value="F:haptoglobin binding"/>
    <property type="evidence" value="ECO:0007669"/>
    <property type="project" value="TreeGrafter"/>
</dbReference>
<dbReference type="GO" id="GO:0020037">
    <property type="term" value="F:heme binding"/>
    <property type="evidence" value="ECO:0007669"/>
    <property type="project" value="InterPro"/>
</dbReference>
<dbReference type="GO" id="GO:0031721">
    <property type="term" value="F:hemoglobin alpha binding"/>
    <property type="evidence" value="ECO:0007669"/>
    <property type="project" value="TreeGrafter"/>
</dbReference>
<dbReference type="GO" id="GO:0046872">
    <property type="term" value="F:metal ion binding"/>
    <property type="evidence" value="ECO:0007669"/>
    <property type="project" value="UniProtKB-KW"/>
</dbReference>
<dbReference type="GO" id="GO:0043177">
    <property type="term" value="F:organic acid binding"/>
    <property type="evidence" value="ECO:0007669"/>
    <property type="project" value="TreeGrafter"/>
</dbReference>
<dbReference type="GO" id="GO:0019825">
    <property type="term" value="F:oxygen binding"/>
    <property type="evidence" value="ECO:0007669"/>
    <property type="project" value="InterPro"/>
</dbReference>
<dbReference type="GO" id="GO:0005344">
    <property type="term" value="F:oxygen carrier activity"/>
    <property type="evidence" value="ECO:0007669"/>
    <property type="project" value="UniProtKB-KW"/>
</dbReference>
<dbReference type="GO" id="GO:0004601">
    <property type="term" value="F:peroxidase activity"/>
    <property type="evidence" value="ECO:0007669"/>
    <property type="project" value="TreeGrafter"/>
</dbReference>
<dbReference type="GO" id="GO:0042744">
    <property type="term" value="P:hydrogen peroxide catabolic process"/>
    <property type="evidence" value="ECO:0007669"/>
    <property type="project" value="TreeGrafter"/>
</dbReference>
<dbReference type="CDD" id="cd08925">
    <property type="entry name" value="Hb-beta-like"/>
    <property type="match status" value="1"/>
</dbReference>
<dbReference type="FunFam" id="1.10.490.10:FF:000001">
    <property type="entry name" value="Hemoglobin subunit beta"/>
    <property type="match status" value="1"/>
</dbReference>
<dbReference type="Gene3D" id="1.10.490.10">
    <property type="entry name" value="Globins"/>
    <property type="match status" value="1"/>
</dbReference>
<dbReference type="InterPro" id="IPR000971">
    <property type="entry name" value="Globin"/>
</dbReference>
<dbReference type="InterPro" id="IPR009050">
    <property type="entry name" value="Globin-like_sf"/>
</dbReference>
<dbReference type="InterPro" id="IPR012292">
    <property type="entry name" value="Globin/Proto"/>
</dbReference>
<dbReference type="InterPro" id="IPR002337">
    <property type="entry name" value="Hemoglobin_b"/>
</dbReference>
<dbReference type="InterPro" id="IPR050056">
    <property type="entry name" value="Hemoglobin_oxygen_transport"/>
</dbReference>
<dbReference type="PANTHER" id="PTHR11442">
    <property type="entry name" value="HEMOGLOBIN FAMILY MEMBER"/>
    <property type="match status" value="1"/>
</dbReference>
<dbReference type="PANTHER" id="PTHR11442:SF42">
    <property type="entry name" value="HEMOGLOBIN SUBUNIT BETA"/>
    <property type="match status" value="1"/>
</dbReference>
<dbReference type="Pfam" id="PF00042">
    <property type="entry name" value="Globin"/>
    <property type="match status" value="1"/>
</dbReference>
<dbReference type="PRINTS" id="PR00814">
    <property type="entry name" value="BETAHAEM"/>
</dbReference>
<dbReference type="SUPFAM" id="SSF46458">
    <property type="entry name" value="Globin-like"/>
    <property type="match status" value="1"/>
</dbReference>
<dbReference type="PROSITE" id="PS01033">
    <property type="entry name" value="GLOBIN"/>
    <property type="match status" value="1"/>
</dbReference>
<name>HBB1_PANPS</name>
<keyword id="KW-0007">Acetylation</keyword>
<keyword id="KW-0903">Direct protein sequencing</keyword>
<keyword id="KW-0349">Heme</keyword>
<keyword id="KW-0408">Iron</keyword>
<keyword id="KW-0479">Metal-binding</keyword>
<keyword id="KW-0488">Methylation</keyword>
<keyword id="KW-0561">Oxygen transport</keyword>
<keyword id="KW-0597">Phosphoprotein</keyword>
<keyword id="KW-0813">Transport</keyword>
<protein>
    <recommendedName>
        <fullName>Hemoglobin subunit beta-1</fullName>
    </recommendedName>
    <alternativeName>
        <fullName>Beta-1-globin</fullName>
    </alternativeName>
    <alternativeName>
        <fullName>Hemoglobin beta-1 chain</fullName>
    </alternativeName>
</protein>